<keyword id="KW-0238">DNA-binding</keyword>
<keyword id="KW-0479">Metal-binding</keyword>
<keyword id="KW-0539">Nucleus</keyword>
<keyword id="KW-0804">Transcription</keyword>
<keyword id="KW-0805">Transcription regulation</keyword>
<keyword id="KW-0843">Virulence</keyword>
<keyword id="KW-0862">Zinc</keyword>
<dbReference type="EMBL" id="FR718881">
    <property type="protein sequence ID" value="CBX87035.1"/>
    <property type="molecule type" value="Genomic_DNA"/>
</dbReference>
<dbReference type="SMR" id="G0LEU0"/>
<dbReference type="EnsemblFungi" id="Bcin01g00130.1">
    <property type="protein sequence ID" value="Bcin01p00130.1"/>
    <property type="gene ID" value="Bcin01g00130"/>
</dbReference>
<dbReference type="VEuPathDB" id="FungiDB:Bcin01g00130"/>
<dbReference type="GO" id="GO:0005634">
    <property type="term" value="C:nucleus"/>
    <property type="evidence" value="ECO:0007669"/>
    <property type="project" value="UniProtKB-SubCell"/>
</dbReference>
<dbReference type="GO" id="GO:0003677">
    <property type="term" value="F:DNA binding"/>
    <property type="evidence" value="ECO:0007669"/>
    <property type="project" value="UniProtKB-KW"/>
</dbReference>
<dbReference type="GO" id="GO:0000981">
    <property type="term" value="F:DNA-binding transcription factor activity, RNA polymerase II-specific"/>
    <property type="evidence" value="ECO:0007669"/>
    <property type="project" value="InterPro"/>
</dbReference>
<dbReference type="GO" id="GO:0008270">
    <property type="term" value="F:zinc ion binding"/>
    <property type="evidence" value="ECO:0007669"/>
    <property type="project" value="InterPro"/>
</dbReference>
<dbReference type="CDD" id="cd00067">
    <property type="entry name" value="GAL4"/>
    <property type="match status" value="1"/>
</dbReference>
<dbReference type="Gene3D" id="4.10.240.10">
    <property type="entry name" value="Zn(2)-C6 fungal-type DNA-binding domain"/>
    <property type="match status" value="1"/>
</dbReference>
<dbReference type="InterPro" id="IPR036864">
    <property type="entry name" value="Zn2-C6_fun-type_DNA-bd_sf"/>
</dbReference>
<dbReference type="InterPro" id="IPR001138">
    <property type="entry name" value="Zn2Cys6_DnaBD"/>
</dbReference>
<dbReference type="PANTHER" id="PTHR47783:SF1">
    <property type="entry name" value="ZN(II)2CYS6 TRANSCRIPTION FACTOR (EUROFUNG)"/>
    <property type="match status" value="1"/>
</dbReference>
<dbReference type="PANTHER" id="PTHR47783">
    <property type="entry name" value="ZN(II)2CYS6 TRANSCRIPTION FACTOR (EUROFUNG)-RELATED"/>
    <property type="match status" value="1"/>
</dbReference>
<dbReference type="Pfam" id="PF00172">
    <property type="entry name" value="Zn_clus"/>
    <property type="match status" value="1"/>
</dbReference>
<dbReference type="PRINTS" id="PR00755">
    <property type="entry name" value="AFLATOXINBRP"/>
</dbReference>
<dbReference type="SMART" id="SM00066">
    <property type="entry name" value="GAL4"/>
    <property type="match status" value="1"/>
</dbReference>
<dbReference type="SUPFAM" id="SSF57701">
    <property type="entry name" value="Zn2/Cys6 DNA-binding domain"/>
    <property type="match status" value="1"/>
</dbReference>
<dbReference type="PROSITE" id="PS00463">
    <property type="entry name" value="ZN2_CY6_FUNGAL_1"/>
    <property type="match status" value="1"/>
</dbReference>
<dbReference type="PROSITE" id="PS50048">
    <property type="entry name" value="ZN2_CY6_FUNGAL_2"/>
    <property type="match status" value="1"/>
</dbReference>
<protein>
    <recommendedName>
        <fullName evidence="4">C6 finger domain transcription factor BOA13</fullName>
    </recommendedName>
    <alternativeName>
        <fullName evidence="4">Botcinic acid biosynthesis cluster B protein 13</fullName>
    </alternativeName>
</protein>
<name>BOA13_BOTFB</name>
<accession>G0LEU0</accession>
<comment type="function">
    <text evidence="5">Transcription factor that probably regulates the gene clusters that mediates the biosynthesis of botcinin acid and its botcinin derivatives, acetate-derived polyketides that contribute to virulence when combined with the sesquiterpene botrydial (Probable). Botcinin acid and its derivatives have been shown to induce chlorosis and necrosis during host plant infection, but also have antifungal activities (Probable).</text>
</comment>
<comment type="subcellular location">
    <subcellularLocation>
        <location evidence="1">Nucleus</location>
    </subcellularLocation>
</comment>
<comment type="induction">
    <text evidence="3">Expression of the botcinic acid clusters genes BOA1-13 and BOA17 is coregulated by BCG1 during both in vitro and in planta growth.</text>
</comment>
<reference key="1">
    <citation type="journal article" date="2011" name="Mol. Plant Pathol.">
        <title>The Botrytis cinerea phytotoxin botcinic acid requires two polyketide synthases for production and has a redundant role in virulence with botrydial.</title>
        <authorList>
            <person name="Dalmais B."/>
            <person name="Schumacher J."/>
            <person name="Moraga J."/>
            <person name="Le Pecheur P."/>
            <person name="Tudzynski B."/>
            <person name="Collado I.G."/>
            <person name="Viaud M."/>
        </authorList>
    </citation>
    <scope>NUCLEOTIDE SEQUENCE [GENOMIC DNA]</scope>
    <scope>FUNCTION</scope>
    <scope>INDUCTION</scope>
    <source>
        <strain>B05.10</strain>
    </source>
</reference>
<reference key="2">
    <citation type="journal article" date="2013" name="ChemBioChem">
        <title>A shared biosynthetic pathway for botcinins and botrylactones revealed through gene deletions.</title>
        <authorList>
            <person name="Massaroli M."/>
            <person name="Moraga J."/>
            <person name="Bastos Borges K."/>
            <person name="Ramirez-Fernandez J."/>
            <person name="Viaud M."/>
            <person name="Gonzalez Collado I."/>
            <person name="Duran-Patron R."/>
            <person name="Hernandez-Galan R."/>
        </authorList>
    </citation>
    <scope>FUNCTION</scope>
</reference>
<evidence type="ECO:0000255" key="1">
    <source>
        <dbReference type="PROSITE-ProRule" id="PRU00227"/>
    </source>
</evidence>
<evidence type="ECO:0000256" key="2">
    <source>
        <dbReference type="SAM" id="MobiDB-lite"/>
    </source>
</evidence>
<evidence type="ECO:0000269" key="3">
    <source>
    </source>
</evidence>
<evidence type="ECO:0000303" key="4">
    <source>
    </source>
</evidence>
<evidence type="ECO:0000305" key="5">
    <source>
    </source>
</evidence>
<feature type="chain" id="PRO_0000444653" description="C6 finger domain transcription factor BOA13">
    <location>
        <begin position="1"/>
        <end position="568"/>
    </location>
</feature>
<feature type="DNA-binding region" description="Zn(2)-C6 fungal-type" evidence="1">
    <location>
        <begin position="14"/>
        <end position="41"/>
    </location>
</feature>
<feature type="region of interest" description="Disordered" evidence="2">
    <location>
        <begin position="92"/>
        <end position="114"/>
    </location>
</feature>
<feature type="region of interest" description="Disordered" evidence="2">
    <location>
        <begin position="207"/>
        <end position="278"/>
    </location>
</feature>
<feature type="region of interest" description="Disordered" evidence="2">
    <location>
        <begin position="467"/>
        <end position="490"/>
    </location>
</feature>
<feature type="compositionally biased region" description="Basic and acidic residues" evidence="2">
    <location>
        <begin position="242"/>
        <end position="259"/>
    </location>
</feature>
<feature type="compositionally biased region" description="Polar residues" evidence="2">
    <location>
        <begin position="260"/>
        <end position="274"/>
    </location>
</feature>
<feature type="compositionally biased region" description="Low complexity" evidence="2">
    <location>
        <begin position="470"/>
        <end position="490"/>
    </location>
</feature>
<proteinExistence type="evidence at transcript level"/>
<organism>
    <name type="scientific">Botryotinia fuckeliana (strain B05.10)</name>
    <name type="common">Noble rot fungus</name>
    <name type="synonym">Botrytis cinerea</name>
    <dbReference type="NCBI Taxonomy" id="332648"/>
    <lineage>
        <taxon>Eukaryota</taxon>
        <taxon>Fungi</taxon>
        <taxon>Dikarya</taxon>
        <taxon>Ascomycota</taxon>
        <taxon>Pezizomycotina</taxon>
        <taxon>Leotiomycetes</taxon>
        <taxon>Helotiales</taxon>
        <taxon>Sclerotiniaceae</taxon>
        <taxon>Botrytis</taxon>
    </lineage>
</organism>
<sequence>MSPPQKPPKLRHACNECHASKVRCSGERTGCRRCVYNQQKCTYSVSMVGKVQGHRRRAAVTGTAPRSGAQSLNINTSTEIISVANADVIHDEANGNDLNSKPNDVPVESSEGITSSPAHCSILPGGNNGKVTTSSAPENFSTSLESIDTSSLETPIIEHEFSWDFSSDERADALNSLALENPSNVDSMKNPEYGDFEYDFSIHEVPATSSSQDDSRSPKRQIADPIPISPVPKFYPSRKRTHSDLSEKQAQHAQNDLRWRSQSQSYKRPTISTQHHNHSFSREMYEYPESSASFDADCSFDRGSTSHSTTSQTNMNHQSMNRIPQTTQSNRISFTAQSHYMVSSMSSSVTHYEASWRFTSKCFIIISKLQKLLRDSSSLSLDVILATNKSAISELAQMFDSTLASNTARSTSPEDFFSIHSEIQPSNTCDTSLSTDFIPLMVYMIALKCIHDLYSQACFIFTQDDHRSRSLSTPSPRNTPSTSNSPFSNPFGLPQLDFGTFKIDIADQRRLFSEIIARELGNCLSACTRLRSYFLMQPGDISTSTGLIEEMFLGIEEGLQSMIKRVKI</sequence>
<gene>
    <name evidence="4" type="primary">BOA13</name>
</gene>